<evidence type="ECO:0000255" key="1">
    <source>
        <dbReference type="HAMAP-Rule" id="MF_00323"/>
    </source>
</evidence>
<reference key="1">
    <citation type="journal article" date="2004" name="PLoS Biol.">
        <title>Phylogenomics of the reproductive parasite Wolbachia pipientis wMel: a streamlined genome overrun by mobile genetic elements.</title>
        <authorList>
            <person name="Wu M."/>
            <person name="Sun L.V."/>
            <person name="Vamathevan J.J."/>
            <person name="Riegler M."/>
            <person name="DeBoy R.T."/>
            <person name="Brownlie J.C."/>
            <person name="McGraw E.A."/>
            <person name="Martin W."/>
            <person name="Esser C."/>
            <person name="Ahmadinejad N."/>
            <person name="Wiegand C."/>
            <person name="Madupu R."/>
            <person name="Beanan M.J."/>
            <person name="Brinkac L.M."/>
            <person name="Daugherty S.C."/>
            <person name="Durkin A.S."/>
            <person name="Kolonay J.F."/>
            <person name="Nelson W.C."/>
            <person name="Mohamoud Y."/>
            <person name="Lee P."/>
            <person name="Berry K.J."/>
            <person name="Young M.B."/>
            <person name="Utterback T.R."/>
            <person name="Weidman J.F."/>
            <person name="Nierman W.C."/>
            <person name="Paulsen I.T."/>
            <person name="Nelson K.E."/>
            <person name="Tettelin H."/>
            <person name="O'Neill S.L."/>
            <person name="Eisen J.A."/>
        </authorList>
    </citation>
    <scope>NUCLEOTIDE SEQUENCE [LARGE SCALE GENOMIC DNA]</scope>
</reference>
<feature type="chain" id="PRO_0000175227" description="Ferrochelatase">
    <location>
        <begin position="1"/>
        <end position="315"/>
    </location>
</feature>
<feature type="binding site" evidence="1">
    <location>
        <position position="193"/>
    </location>
    <ligand>
        <name>Fe cation</name>
        <dbReference type="ChEBI" id="CHEBI:24875"/>
    </ligand>
</feature>
<feature type="binding site" evidence="1">
    <location>
        <position position="273"/>
    </location>
    <ligand>
        <name>Fe cation</name>
        <dbReference type="ChEBI" id="CHEBI:24875"/>
    </ligand>
</feature>
<keyword id="KW-0963">Cytoplasm</keyword>
<keyword id="KW-0350">Heme biosynthesis</keyword>
<keyword id="KW-0408">Iron</keyword>
<keyword id="KW-0456">Lyase</keyword>
<keyword id="KW-0479">Metal-binding</keyword>
<keyword id="KW-0627">Porphyrin biosynthesis</keyword>
<accession>Q73FY6</accession>
<organism>
    <name type="scientific">Wolbachia pipientis wMel</name>
    <dbReference type="NCBI Taxonomy" id="163164"/>
    <lineage>
        <taxon>Bacteria</taxon>
        <taxon>Pseudomonadati</taxon>
        <taxon>Pseudomonadota</taxon>
        <taxon>Alphaproteobacteria</taxon>
        <taxon>Rickettsiales</taxon>
        <taxon>Anaplasmataceae</taxon>
        <taxon>Wolbachieae</taxon>
        <taxon>Wolbachia</taxon>
    </lineage>
</organism>
<comment type="function">
    <text evidence="1">Catalyzes the ferrous insertion into protoporphyrin IX.</text>
</comment>
<comment type="catalytic activity">
    <reaction evidence="1">
        <text>heme b + 2 H(+) = protoporphyrin IX + Fe(2+)</text>
        <dbReference type="Rhea" id="RHEA:22584"/>
        <dbReference type="ChEBI" id="CHEBI:15378"/>
        <dbReference type="ChEBI" id="CHEBI:29033"/>
        <dbReference type="ChEBI" id="CHEBI:57306"/>
        <dbReference type="ChEBI" id="CHEBI:60344"/>
        <dbReference type="EC" id="4.98.1.1"/>
    </reaction>
</comment>
<comment type="pathway">
    <text evidence="1">Porphyrin-containing compound metabolism; protoheme biosynthesis; protoheme from protoporphyrin-IX: step 1/1.</text>
</comment>
<comment type="subcellular location">
    <subcellularLocation>
        <location evidence="1">Cytoplasm</location>
    </subcellularLocation>
</comment>
<comment type="similarity">
    <text evidence="1">Belongs to the ferrochelatase family.</text>
</comment>
<protein>
    <recommendedName>
        <fullName evidence="1">Ferrochelatase</fullName>
        <ecNumber evidence="1">4.98.1.1</ecNumber>
    </recommendedName>
    <alternativeName>
        <fullName evidence="1">Heme synthase</fullName>
    </alternativeName>
    <alternativeName>
        <fullName evidence="1">Protoheme ferro-lyase</fullName>
    </alternativeName>
</protein>
<gene>
    <name evidence="1" type="primary">hemH</name>
    <name type="ordered locus">WD_1186</name>
</gene>
<sequence>MKKAVILFNLGGPDSLNAVRPFLFNLFYDRRIINLPNPFRFLLAKFISAKRENTARKIYEEIGGKSPILENTKMQANASELKLNENRNHVHKVFICMRYWRPFADEVIESVKQFDPDEVILLPLYPQYSTTTTLSSIENWQKNAKRYGLKCNTKMIHRYYDNQDFIEAHTNLIAKYYKLARKIGKPRVLFSAHSLPLSIIKKGDPYASQVERSVELIVEKLAINNLDWSICYQSKIGPVKWLEPSTESELLRAKADGVPVVLSPISFVSEHSETLVELDIEYKAIIKDGYYFRVPTLSTDPLFIKCLADLCINLP</sequence>
<name>HEMH_WOLPM</name>
<dbReference type="EC" id="4.98.1.1" evidence="1"/>
<dbReference type="EMBL" id="AE017196">
    <property type="protein sequence ID" value="AAS14832.1"/>
    <property type="molecule type" value="Genomic_DNA"/>
</dbReference>
<dbReference type="RefSeq" id="WP_010082099.1">
    <property type="nucleotide sequence ID" value="NZ_OX384529.1"/>
</dbReference>
<dbReference type="SMR" id="Q73FY6"/>
<dbReference type="EnsemblBacteria" id="AAS14832">
    <property type="protein sequence ID" value="AAS14832"/>
    <property type="gene ID" value="WD_1186"/>
</dbReference>
<dbReference type="GeneID" id="70036653"/>
<dbReference type="KEGG" id="wol:WD_1186"/>
<dbReference type="eggNOG" id="COG0276">
    <property type="taxonomic scope" value="Bacteria"/>
</dbReference>
<dbReference type="UniPathway" id="UPA00252">
    <property type="reaction ID" value="UER00325"/>
</dbReference>
<dbReference type="Proteomes" id="UP000008215">
    <property type="component" value="Chromosome"/>
</dbReference>
<dbReference type="GO" id="GO:0005737">
    <property type="term" value="C:cytoplasm"/>
    <property type="evidence" value="ECO:0007669"/>
    <property type="project" value="UniProtKB-SubCell"/>
</dbReference>
<dbReference type="GO" id="GO:0004325">
    <property type="term" value="F:ferrochelatase activity"/>
    <property type="evidence" value="ECO:0007669"/>
    <property type="project" value="UniProtKB-UniRule"/>
</dbReference>
<dbReference type="GO" id="GO:0046872">
    <property type="term" value="F:metal ion binding"/>
    <property type="evidence" value="ECO:0007669"/>
    <property type="project" value="UniProtKB-KW"/>
</dbReference>
<dbReference type="GO" id="GO:0006783">
    <property type="term" value="P:heme biosynthetic process"/>
    <property type="evidence" value="ECO:0007669"/>
    <property type="project" value="UniProtKB-UniRule"/>
</dbReference>
<dbReference type="CDD" id="cd00419">
    <property type="entry name" value="Ferrochelatase_C"/>
    <property type="match status" value="1"/>
</dbReference>
<dbReference type="CDD" id="cd03411">
    <property type="entry name" value="Ferrochelatase_N"/>
    <property type="match status" value="1"/>
</dbReference>
<dbReference type="Gene3D" id="3.40.50.1400">
    <property type="match status" value="2"/>
</dbReference>
<dbReference type="HAMAP" id="MF_00323">
    <property type="entry name" value="Ferrochelatase"/>
    <property type="match status" value="1"/>
</dbReference>
<dbReference type="InterPro" id="IPR001015">
    <property type="entry name" value="Ferrochelatase"/>
</dbReference>
<dbReference type="InterPro" id="IPR019772">
    <property type="entry name" value="Ferrochelatase_AS"/>
</dbReference>
<dbReference type="InterPro" id="IPR033644">
    <property type="entry name" value="Ferrochelatase_C"/>
</dbReference>
<dbReference type="InterPro" id="IPR033659">
    <property type="entry name" value="Ferrochelatase_N"/>
</dbReference>
<dbReference type="NCBIfam" id="TIGR00109">
    <property type="entry name" value="hemH"/>
    <property type="match status" value="1"/>
</dbReference>
<dbReference type="PANTHER" id="PTHR11108">
    <property type="entry name" value="FERROCHELATASE"/>
    <property type="match status" value="1"/>
</dbReference>
<dbReference type="PANTHER" id="PTHR11108:SF1">
    <property type="entry name" value="FERROCHELATASE, MITOCHONDRIAL"/>
    <property type="match status" value="1"/>
</dbReference>
<dbReference type="Pfam" id="PF00762">
    <property type="entry name" value="Ferrochelatase"/>
    <property type="match status" value="1"/>
</dbReference>
<dbReference type="SUPFAM" id="SSF53800">
    <property type="entry name" value="Chelatase"/>
    <property type="match status" value="1"/>
</dbReference>
<dbReference type="PROSITE" id="PS00534">
    <property type="entry name" value="FERROCHELATASE"/>
    <property type="match status" value="1"/>
</dbReference>
<proteinExistence type="inferred from homology"/>